<geneLocation type="chloroplast"/>
<comment type="catalytic activity">
    <reaction>
        <text>2 pyruvate + H(+) = (2S)-2-acetolactate + CO2</text>
        <dbReference type="Rhea" id="RHEA:25249"/>
        <dbReference type="ChEBI" id="CHEBI:15361"/>
        <dbReference type="ChEBI" id="CHEBI:15378"/>
        <dbReference type="ChEBI" id="CHEBI:16526"/>
        <dbReference type="ChEBI" id="CHEBI:58476"/>
        <dbReference type="EC" id="2.2.1.6"/>
    </reaction>
</comment>
<comment type="pathway">
    <text>Amino-acid biosynthesis; L-isoleucine biosynthesis; L-isoleucine from 2-oxobutanoate: step 1/4.</text>
</comment>
<comment type="pathway">
    <text>Amino-acid biosynthesis; L-valine biosynthesis; L-valine from pyruvate: step 1/4.</text>
</comment>
<comment type="subunit">
    <text evidence="1">Dimer of large and small chains.</text>
</comment>
<comment type="subcellular location">
    <subcellularLocation>
        <location>Plastid</location>
        <location>Chloroplast</location>
    </subcellularLocation>
</comment>
<comment type="similarity">
    <text evidence="3">Belongs to the acetolactate synthase small subunit family.</text>
</comment>
<evidence type="ECO:0000250" key="1"/>
<evidence type="ECO:0000255" key="2">
    <source>
        <dbReference type="PROSITE-ProRule" id="PRU01007"/>
    </source>
</evidence>
<evidence type="ECO:0000305" key="3"/>
<gene>
    <name type="primary">ilvH</name>
</gene>
<name>ILVH_CYACA</name>
<organism>
    <name type="scientific">Cyanidium caldarium</name>
    <name type="common">Red alga</name>
    <dbReference type="NCBI Taxonomy" id="2771"/>
    <lineage>
        <taxon>Eukaryota</taxon>
        <taxon>Rhodophyta</taxon>
        <taxon>Bangiophyceae</taxon>
        <taxon>Cyanidiales</taxon>
        <taxon>Cyanidiaceae</taxon>
        <taxon>Cyanidium</taxon>
    </lineage>
</organism>
<feature type="chain" id="PRO_0000151425" description="Acetolactate synthase small subunit">
    <location>
        <begin position="1"/>
        <end position="172"/>
    </location>
</feature>
<feature type="domain" description="ACT" evidence="2">
    <location>
        <begin position="4"/>
        <end position="78"/>
    </location>
</feature>
<accession>Q9TLY1</accession>
<dbReference type="EC" id="2.2.1.6"/>
<dbReference type="EMBL" id="AF022186">
    <property type="protein sequence ID" value="AAF12957.1"/>
    <property type="molecule type" value="Genomic_DNA"/>
</dbReference>
<dbReference type="RefSeq" id="NP_045137.1">
    <property type="nucleotide sequence ID" value="NC_001840.1"/>
</dbReference>
<dbReference type="SMR" id="Q9TLY1"/>
<dbReference type="GeneID" id="800161"/>
<dbReference type="UniPathway" id="UPA00047">
    <property type="reaction ID" value="UER00055"/>
</dbReference>
<dbReference type="UniPathway" id="UPA00049">
    <property type="reaction ID" value="UER00059"/>
</dbReference>
<dbReference type="GO" id="GO:0009507">
    <property type="term" value="C:chloroplast"/>
    <property type="evidence" value="ECO:0007669"/>
    <property type="project" value="UniProtKB-SubCell"/>
</dbReference>
<dbReference type="GO" id="GO:0005829">
    <property type="term" value="C:cytosol"/>
    <property type="evidence" value="ECO:0007669"/>
    <property type="project" value="TreeGrafter"/>
</dbReference>
<dbReference type="GO" id="GO:0003984">
    <property type="term" value="F:acetolactate synthase activity"/>
    <property type="evidence" value="ECO:0007669"/>
    <property type="project" value="UniProtKB-EC"/>
</dbReference>
<dbReference type="GO" id="GO:1990610">
    <property type="term" value="F:acetolactate synthase regulator activity"/>
    <property type="evidence" value="ECO:0007669"/>
    <property type="project" value="InterPro"/>
</dbReference>
<dbReference type="GO" id="GO:0009097">
    <property type="term" value="P:isoleucine biosynthetic process"/>
    <property type="evidence" value="ECO:0007669"/>
    <property type="project" value="UniProtKB-UniPathway"/>
</dbReference>
<dbReference type="GO" id="GO:0009099">
    <property type="term" value="P:L-valine biosynthetic process"/>
    <property type="evidence" value="ECO:0007669"/>
    <property type="project" value="UniProtKB-UniPathway"/>
</dbReference>
<dbReference type="CDD" id="cd04878">
    <property type="entry name" value="ACT_AHAS"/>
    <property type="match status" value="1"/>
</dbReference>
<dbReference type="FunFam" id="3.30.70.1150:FF:000001">
    <property type="entry name" value="Acetolactate synthase small subunit"/>
    <property type="match status" value="1"/>
</dbReference>
<dbReference type="FunFam" id="3.30.70.260:FF:000001">
    <property type="entry name" value="Acetolactate synthase, small subunit"/>
    <property type="match status" value="1"/>
</dbReference>
<dbReference type="Gene3D" id="3.30.70.260">
    <property type="match status" value="1"/>
</dbReference>
<dbReference type="Gene3D" id="3.30.70.1150">
    <property type="entry name" value="ACT-like. Chain A, domain 2"/>
    <property type="match status" value="1"/>
</dbReference>
<dbReference type="InterPro" id="IPR004789">
    <property type="entry name" value="Acetalactate_synth_ssu"/>
</dbReference>
<dbReference type="InterPro" id="IPR027271">
    <property type="entry name" value="Acetolactate_synth/TF_NikR_C"/>
</dbReference>
<dbReference type="InterPro" id="IPR019455">
    <property type="entry name" value="Acetolactate_synth_ssu_C"/>
</dbReference>
<dbReference type="InterPro" id="IPR045865">
    <property type="entry name" value="ACT-like_dom_sf"/>
</dbReference>
<dbReference type="InterPro" id="IPR002912">
    <property type="entry name" value="ACT_dom"/>
</dbReference>
<dbReference type="InterPro" id="IPR039557">
    <property type="entry name" value="AHAS_ACT"/>
</dbReference>
<dbReference type="InterPro" id="IPR054480">
    <property type="entry name" value="AHAS_small-like_ACT"/>
</dbReference>
<dbReference type="NCBIfam" id="TIGR00119">
    <property type="entry name" value="acolac_sm"/>
    <property type="match status" value="1"/>
</dbReference>
<dbReference type="NCBIfam" id="NF008864">
    <property type="entry name" value="PRK11895.1"/>
    <property type="match status" value="1"/>
</dbReference>
<dbReference type="PANTHER" id="PTHR30239">
    <property type="entry name" value="ACETOLACTATE SYNTHASE SMALL SUBUNIT"/>
    <property type="match status" value="1"/>
</dbReference>
<dbReference type="PANTHER" id="PTHR30239:SF0">
    <property type="entry name" value="ACETOLACTATE SYNTHASE SMALL SUBUNIT 1, CHLOROPLASTIC"/>
    <property type="match status" value="1"/>
</dbReference>
<dbReference type="Pfam" id="PF22629">
    <property type="entry name" value="ACT_AHAS_ss"/>
    <property type="match status" value="1"/>
</dbReference>
<dbReference type="Pfam" id="PF10369">
    <property type="entry name" value="ALS_ss_C"/>
    <property type="match status" value="1"/>
</dbReference>
<dbReference type="SUPFAM" id="SSF55021">
    <property type="entry name" value="ACT-like"/>
    <property type="match status" value="2"/>
</dbReference>
<dbReference type="PROSITE" id="PS51671">
    <property type="entry name" value="ACT"/>
    <property type="match status" value="1"/>
</dbReference>
<protein>
    <recommendedName>
        <fullName>Acetolactate synthase small subunit</fullName>
        <ecNumber>2.2.1.6</ecNumber>
    </recommendedName>
    <alternativeName>
        <fullName>Acetohydroxy-acid synthase small subunit</fullName>
        <shortName>AHAS</shortName>
        <shortName>ALS</shortName>
    </alternativeName>
</protein>
<sequence length="172" mass="18977">MKYTLSVLVEDEAGVLTRIAGLFARRGFNIESLAVGPAEQKGISRITMVVPGDDRTVEQLTKQLYKLVNILKVDNITEIPCVERELILVKINASTSSRPEILSILQVFRAKVVDLSENLLVLELTGDPGKVAAIQQLLQKFGIIEIARTGKIALTRTSKVNTEFLKSISMEI</sequence>
<reference key="1">
    <citation type="journal article" date="2000" name="J. Mol. Evol.">
        <title>The structure and gene repertoire of an ancient red algal plastid genome.</title>
        <authorList>
            <person name="Gloeckner G."/>
            <person name="Rosenthal A."/>
            <person name="Valentin K.-U."/>
        </authorList>
    </citation>
    <scope>NUCLEOTIDE SEQUENCE [LARGE SCALE GENOMIC DNA]</scope>
    <source>
        <strain>RK-1</strain>
    </source>
</reference>
<proteinExistence type="inferred from homology"/>
<keyword id="KW-0028">Amino-acid biosynthesis</keyword>
<keyword id="KW-0100">Branched-chain amino acid biosynthesis</keyword>
<keyword id="KW-0150">Chloroplast</keyword>
<keyword id="KW-0934">Plastid</keyword>
<keyword id="KW-0808">Transferase</keyword>